<reference key="1">
    <citation type="submission" date="2003-05" db="EMBL/GenBank/DDBJ databases">
        <title>Characterization of the equine MPZ, PMP22 and GJB1 genes and their evaluation as candidate genes for equine idiopathic laryngeal hemiplegia.</title>
        <authorList>
            <person name="Blechynden L.M."/>
            <person name="Akkari P.A."/>
            <person name="Hilbert B.J."/>
            <person name="Laing N.G."/>
        </authorList>
    </citation>
    <scope>NUCLEOTIDE SEQUENCE [MRNA]</scope>
</reference>
<sequence length="248" mass="27485">MAPGAPSSSPSPILAALLFSSLVLSPAQAIVVYTDKEVYGAVGSRVTLHCSFWSSEWVSDDISFTWRYQPEGGRDAISIFHYAKGQPYIDEVGTFKERIQWVGDPQWKDGSIVIHNLDYSDNGTFTCDVKNPPDIVGKTSQVTLYVFEKVPTRYGVVLGAVIGGVLGVVLLVLLLFYVVRYCWLRRQAALQRRLSAMEKGKLHKPGKDTSKRGRQTPVLYAMLDHSRSTKAASEKKAKGLGESRKDKK</sequence>
<proteinExistence type="evidence at transcript level"/>
<comment type="function">
    <text evidence="3">Is an adhesion molecule necessary for normal myelination in the peripheral nervous system. It mediates adhesion between adjacent myelin wraps and ultimately drives myelin compaction.</text>
</comment>
<comment type="subunit">
    <text evidence="1">Homodimer and homotetramer.</text>
</comment>
<comment type="subcellular location">
    <subcellularLocation>
        <location evidence="3">Cell membrane</location>
        <topology evidence="3">Single-pass type I membrane protein</topology>
    </subcellularLocation>
</comment>
<comment type="PTM">
    <text evidence="1">N-glycosylated; contains sulfate-substituted glycan.</text>
</comment>
<comment type="similarity">
    <text evidence="8">Belongs to the myelin P0 protein family.</text>
</comment>
<name>MYP0_HORSE</name>
<protein>
    <recommendedName>
        <fullName>Myelin protein P0</fullName>
    </recommendedName>
    <alternativeName>
        <fullName>Myelin peripheral protein</fullName>
        <shortName>MPP</shortName>
    </alternativeName>
    <alternativeName>
        <fullName>Myelin protein zero</fullName>
    </alternativeName>
</protein>
<keyword id="KW-1003">Cell membrane</keyword>
<keyword id="KW-1015">Disulfide bond</keyword>
<keyword id="KW-0325">Glycoprotein</keyword>
<keyword id="KW-0393">Immunoglobulin domain</keyword>
<keyword id="KW-0472">Membrane</keyword>
<keyword id="KW-0597">Phosphoprotein</keyword>
<keyword id="KW-1185">Reference proteome</keyword>
<keyword id="KW-0732">Signal</keyword>
<keyword id="KW-0812">Transmembrane</keyword>
<keyword id="KW-1133">Transmembrane helix</keyword>
<organism>
    <name type="scientific">Equus caballus</name>
    <name type="common">Horse</name>
    <dbReference type="NCBI Taxonomy" id="9796"/>
    <lineage>
        <taxon>Eukaryota</taxon>
        <taxon>Metazoa</taxon>
        <taxon>Chordata</taxon>
        <taxon>Craniata</taxon>
        <taxon>Vertebrata</taxon>
        <taxon>Euteleostomi</taxon>
        <taxon>Mammalia</taxon>
        <taxon>Eutheria</taxon>
        <taxon>Laurasiatheria</taxon>
        <taxon>Perissodactyla</taxon>
        <taxon>Equidae</taxon>
        <taxon>Equus</taxon>
    </lineage>
</organism>
<evidence type="ECO:0000250" key="1"/>
<evidence type="ECO:0000250" key="2">
    <source>
        <dbReference type="UniProtKB" id="P10522"/>
    </source>
</evidence>
<evidence type="ECO:0000250" key="3">
    <source>
        <dbReference type="UniProtKB" id="P25189"/>
    </source>
</evidence>
<evidence type="ECO:0000250" key="4">
    <source>
        <dbReference type="UniProtKB" id="P27573"/>
    </source>
</evidence>
<evidence type="ECO:0000255" key="5"/>
<evidence type="ECO:0000255" key="6">
    <source>
        <dbReference type="PROSITE-ProRule" id="PRU00114"/>
    </source>
</evidence>
<evidence type="ECO:0000256" key="7">
    <source>
        <dbReference type="SAM" id="MobiDB-lite"/>
    </source>
</evidence>
<evidence type="ECO:0000305" key="8"/>
<accession>Q6WEB5</accession>
<dbReference type="EMBL" id="AY293741">
    <property type="protein sequence ID" value="AAQ55549.1"/>
    <property type="molecule type" value="mRNA"/>
</dbReference>
<dbReference type="RefSeq" id="NP_001075363.1">
    <property type="nucleotide sequence ID" value="NM_001081894.2"/>
</dbReference>
<dbReference type="SMR" id="Q6WEB5"/>
<dbReference type="FunCoup" id="Q6WEB5">
    <property type="interactions" value="134"/>
</dbReference>
<dbReference type="STRING" id="9796.ENSECAP00000042161"/>
<dbReference type="GlyCosmos" id="Q6WEB5">
    <property type="glycosylation" value="1 site, No reported glycans"/>
</dbReference>
<dbReference type="PaxDb" id="9796-ENSECAP00000042161"/>
<dbReference type="GeneID" id="100034024"/>
<dbReference type="KEGG" id="ecb:100034024"/>
<dbReference type="CTD" id="4359"/>
<dbReference type="HOGENOM" id="CLU_090350_3_1_1"/>
<dbReference type="InParanoid" id="Q6WEB5"/>
<dbReference type="OMA" id="WVGDPHW"/>
<dbReference type="OrthoDB" id="9941287at2759"/>
<dbReference type="Proteomes" id="UP000002281">
    <property type="component" value="Chromosome 5"/>
</dbReference>
<dbReference type="Bgee" id="ENSECAG00000009075">
    <property type="expression patterns" value="Expressed in zone of skin and 16 other cell types or tissues"/>
</dbReference>
<dbReference type="ExpressionAtlas" id="Q6WEB5">
    <property type="expression patterns" value="baseline"/>
</dbReference>
<dbReference type="GO" id="GO:0005886">
    <property type="term" value="C:plasma membrane"/>
    <property type="evidence" value="ECO:0000250"/>
    <property type="project" value="UniProtKB"/>
</dbReference>
<dbReference type="GO" id="GO:0098743">
    <property type="term" value="P:cell aggregation"/>
    <property type="evidence" value="ECO:0000250"/>
    <property type="project" value="UniProtKB"/>
</dbReference>
<dbReference type="GO" id="GO:0098742">
    <property type="term" value="P:cell-cell adhesion via plasma-membrane adhesion molecules"/>
    <property type="evidence" value="ECO:0000250"/>
    <property type="project" value="UniProtKB"/>
</dbReference>
<dbReference type="GO" id="GO:0042552">
    <property type="term" value="P:myelination"/>
    <property type="evidence" value="ECO:0000250"/>
    <property type="project" value="UniProtKB"/>
</dbReference>
<dbReference type="CDD" id="cd05879">
    <property type="entry name" value="IgV_P0"/>
    <property type="match status" value="1"/>
</dbReference>
<dbReference type="FunFam" id="2.60.40.10:FF:000193">
    <property type="entry name" value="Myelin protein zero-like 1 like"/>
    <property type="match status" value="1"/>
</dbReference>
<dbReference type="Gene3D" id="2.60.40.10">
    <property type="entry name" value="Immunoglobulins"/>
    <property type="match status" value="1"/>
</dbReference>
<dbReference type="InterPro" id="IPR007110">
    <property type="entry name" value="Ig-like_dom"/>
</dbReference>
<dbReference type="InterPro" id="IPR036179">
    <property type="entry name" value="Ig-like_dom_sf"/>
</dbReference>
<dbReference type="InterPro" id="IPR013783">
    <property type="entry name" value="Ig-like_fold"/>
</dbReference>
<dbReference type="InterPro" id="IPR003599">
    <property type="entry name" value="Ig_sub"/>
</dbReference>
<dbReference type="InterPro" id="IPR013106">
    <property type="entry name" value="Ig_V-set"/>
</dbReference>
<dbReference type="InterPro" id="IPR000920">
    <property type="entry name" value="Myelin_P0-rel"/>
</dbReference>
<dbReference type="InterPro" id="IPR019738">
    <property type="entry name" value="Myelin_P0_CS"/>
</dbReference>
<dbReference type="InterPro" id="IPR047014">
    <property type="entry name" value="Myelin_P0_Ig-like"/>
</dbReference>
<dbReference type="InterPro" id="IPR019566">
    <property type="entry name" value="MYP0_C"/>
</dbReference>
<dbReference type="PANTHER" id="PTHR13869">
    <property type="entry name" value="MYELIN P0 RELATED"/>
    <property type="match status" value="1"/>
</dbReference>
<dbReference type="PANTHER" id="PTHR13869:SF7">
    <property type="entry name" value="MYELIN PROTEIN P0"/>
    <property type="match status" value="1"/>
</dbReference>
<dbReference type="Pfam" id="PF10570">
    <property type="entry name" value="Myelin-PO_C"/>
    <property type="match status" value="1"/>
</dbReference>
<dbReference type="Pfam" id="PF07686">
    <property type="entry name" value="V-set"/>
    <property type="match status" value="1"/>
</dbReference>
<dbReference type="PRINTS" id="PR00213">
    <property type="entry name" value="MYELINP0"/>
</dbReference>
<dbReference type="SMART" id="SM00409">
    <property type="entry name" value="IG"/>
    <property type="match status" value="1"/>
</dbReference>
<dbReference type="SMART" id="SM00406">
    <property type="entry name" value="IGv"/>
    <property type="match status" value="1"/>
</dbReference>
<dbReference type="SUPFAM" id="SSF48726">
    <property type="entry name" value="Immunoglobulin"/>
    <property type="match status" value="1"/>
</dbReference>
<dbReference type="PROSITE" id="PS50835">
    <property type="entry name" value="IG_LIKE"/>
    <property type="match status" value="1"/>
</dbReference>
<dbReference type="PROSITE" id="PS00568">
    <property type="entry name" value="MYELIN_P0"/>
    <property type="match status" value="1"/>
</dbReference>
<feature type="signal peptide" evidence="5">
    <location>
        <begin position="1"/>
        <end position="29"/>
    </location>
</feature>
<feature type="chain" id="PRO_0000249730" description="Myelin protein P0">
    <location>
        <begin position="30"/>
        <end position="248"/>
    </location>
</feature>
<feature type="topological domain" description="Extracellular" evidence="1">
    <location>
        <begin position="30"/>
        <end position="153"/>
    </location>
</feature>
<feature type="transmembrane region" description="Helical" evidence="1">
    <location>
        <begin position="154"/>
        <end position="179"/>
    </location>
</feature>
<feature type="topological domain" description="Cytoplasmic" evidence="1">
    <location>
        <begin position="180"/>
        <end position="248"/>
    </location>
</feature>
<feature type="domain" description="Ig-like V-type">
    <location>
        <begin position="30"/>
        <end position="143"/>
    </location>
</feature>
<feature type="region of interest" description="Disordered" evidence="7">
    <location>
        <begin position="222"/>
        <end position="248"/>
    </location>
</feature>
<feature type="compositionally biased region" description="Basic and acidic residues" evidence="7">
    <location>
        <begin position="224"/>
        <end position="248"/>
    </location>
</feature>
<feature type="modified residue" description="Phosphoserine; by PKC" evidence="2">
    <location>
        <position position="210"/>
    </location>
</feature>
<feature type="modified residue" description="Phosphoserine" evidence="4">
    <location>
        <position position="226"/>
    </location>
</feature>
<feature type="modified residue" description="Phosphoserine" evidence="4">
    <location>
        <position position="228"/>
    </location>
</feature>
<feature type="modified residue" description="Phosphoserine; by PKC" evidence="2">
    <location>
        <position position="233"/>
    </location>
</feature>
<feature type="modified residue" description="Phosphoserine; by PKC" evidence="2">
    <location>
        <position position="243"/>
    </location>
</feature>
<feature type="glycosylation site" description="N-linked (GlcNAc...) (complex) asparagine" evidence="5">
    <location>
        <position position="122"/>
    </location>
</feature>
<feature type="disulfide bond" evidence="6">
    <location>
        <begin position="50"/>
        <end position="127"/>
    </location>
</feature>
<gene>
    <name type="primary">MPZ</name>
</gene>